<evidence type="ECO:0000305" key="1"/>
<keyword id="KW-0012">Acyltransferase</keyword>
<keyword id="KW-0963">Cytoplasm</keyword>
<keyword id="KW-1185">Reference proteome</keyword>
<keyword id="KW-0808">Transferase</keyword>
<reference key="1">
    <citation type="journal article" date="1997" name="Nature">
        <title>Genomic sequence of a Lyme disease spirochaete, Borrelia burgdorferi.</title>
        <authorList>
            <person name="Fraser C.M."/>
            <person name="Casjens S."/>
            <person name="Huang W.M."/>
            <person name="Sutton G.G."/>
            <person name="Clayton R.A."/>
            <person name="Lathigra R."/>
            <person name="White O."/>
            <person name="Ketchum K.A."/>
            <person name="Dodson R.J."/>
            <person name="Hickey E.K."/>
            <person name="Gwinn M.L."/>
            <person name="Dougherty B.A."/>
            <person name="Tomb J.-F."/>
            <person name="Fleischmann R.D."/>
            <person name="Richardson D.L."/>
            <person name="Peterson J.D."/>
            <person name="Kerlavage A.R."/>
            <person name="Quackenbush J."/>
            <person name="Salzberg S.L."/>
            <person name="Hanson M."/>
            <person name="van Vugt R."/>
            <person name="Palmer N."/>
            <person name="Adams M.D."/>
            <person name="Gocayne J.D."/>
            <person name="Weidman J.F."/>
            <person name="Utterback T.R."/>
            <person name="Watthey L."/>
            <person name="McDonald L.A."/>
            <person name="Artiach P."/>
            <person name="Bowman C."/>
            <person name="Garland S.A."/>
            <person name="Fujii C."/>
            <person name="Cotton M.D."/>
            <person name="Horst K."/>
            <person name="Roberts K.M."/>
            <person name="Hatch B."/>
            <person name="Smith H.O."/>
            <person name="Venter J.C."/>
        </authorList>
    </citation>
    <scope>NUCLEOTIDE SEQUENCE [LARGE SCALE GENOMIC DNA]</scope>
    <source>
        <strain>ATCC 35210 / DSM 4680 / CIP 102532 / B31</strain>
    </source>
</reference>
<comment type="catalytic activity">
    <reaction>
        <text>acetyl-CoA + phosphate = acetyl phosphate + CoA</text>
        <dbReference type="Rhea" id="RHEA:19521"/>
        <dbReference type="ChEBI" id="CHEBI:22191"/>
        <dbReference type="ChEBI" id="CHEBI:43474"/>
        <dbReference type="ChEBI" id="CHEBI:57287"/>
        <dbReference type="ChEBI" id="CHEBI:57288"/>
        <dbReference type="EC" id="2.3.1.8"/>
    </reaction>
</comment>
<comment type="pathway">
    <text>Metabolic intermediate biosynthesis; acetyl-CoA biosynthesis; acetyl-CoA from acetate: step 2/2.</text>
</comment>
<comment type="subcellular location">
    <subcellularLocation>
        <location evidence="1">Cytoplasm</location>
    </subcellularLocation>
</comment>
<comment type="similarity">
    <text evidence="1">Belongs to the phosphate acetyltransferase and butyryltransferase family.</text>
</comment>
<organism>
    <name type="scientific">Borreliella burgdorferi (strain ATCC 35210 / DSM 4680 / CIP 102532 / B31)</name>
    <name type="common">Borrelia burgdorferi</name>
    <dbReference type="NCBI Taxonomy" id="224326"/>
    <lineage>
        <taxon>Bacteria</taxon>
        <taxon>Pseudomonadati</taxon>
        <taxon>Spirochaetota</taxon>
        <taxon>Spirochaetia</taxon>
        <taxon>Spirochaetales</taxon>
        <taxon>Borreliaceae</taxon>
        <taxon>Borreliella</taxon>
    </lineage>
</organism>
<proteinExistence type="inferred from homology"/>
<name>PTAS_BORBU</name>
<sequence length="352" mass="38846">MLYSFYKVFCLKDYVFKKARIFVKENKLKANIVFPESSDSRVLKAAIVILQKNLADSIILIGKKDTVINSLKEFSNCNDILGRIEVVDPNSFPDIEMYLDEYWSLQKLKGVTKQSLKTQVLDEITFAMLMVRFGYAKSCVCGAVSTSAKVLSNALRIIPKLEGVKIISSFMIMDTLCTARNVDFCFGHNGILFFADCSVVVNPNSLELAEIALQSAKSFKDILNAKPKVALLSFSTKGSSSAKETEKVKNALNIVRNKESDLLIDGELQLDSAIIKDVAEKKCRESLVAGSANVLIFPNLDAGNIGYKLVERFAFAKAYGPFLQGFSKPISDLSRGCSVDEIVFASALMISI</sequence>
<accession>O51535</accession>
<feature type="chain" id="PRO_0000179121" description="Phosphate acetyltransferase">
    <location>
        <begin position="1"/>
        <end position="352"/>
    </location>
</feature>
<dbReference type="EC" id="2.3.1.8"/>
<dbReference type="EMBL" id="AE000783">
    <property type="status" value="NOT_ANNOTATED_CDS"/>
    <property type="molecule type" value="Genomic_DNA"/>
</dbReference>
<dbReference type="PIR" id="D70173">
    <property type="entry name" value="D70173"/>
</dbReference>
<dbReference type="RefSeq" id="YP_008686583.1">
    <property type="nucleotide sequence ID" value="NC_001318.1"/>
</dbReference>
<dbReference type="SMR" id="O51535"/>
<dbReference type="PATRIC" id="fig|224326.49.peg.980"/>
<dbReference type="OrthoDB" id="9805787at2"/>
<dbReference type="UniPathway" id="UPA00340">
    <property type="reaction ID" value="UER00459"/>
</dbReference>
<dbReference type="Proteomes" id="UP000001807">
    <property type="component" value="Chromosome"/>
</dbReference>
<dbReference type="GO" id="GO:0005737">
    <property type="term" value="C:cytoplasm"/>
    <property type="evidence" value="ECO:0007669"/>
    <property type="project" value="UniProtKB-SubCell"/>
</dbReference>
<dbReference type="GO" id="GO:0008959">
    <property type="term" value="F:phosphate acetyltransferase activity"/>
    <property type="evidence" value="ECO:0007669"/>
    <property type="project" value="UniProtKB-EC"/>
</dbReference>
<dbReference type="GO" id="GO:0006085">
    <property type="term" value="P:acetyl-CoA biosynthetic process"/>
    <property type="evidence" value="ECO:0007669"/>
    <property type="project" value="UniProtKB-UniPathway"/>
</dbReference>
<dbReference type="Gene3D" id="3.40.50.10950">
    <property type="match status" value="1"/>
</dbReference>
<dbReference type="Gene3D" id="3.40.50.10750">
    <property type="entry name" value="Isocitrate/Isopropylmalate dehydrogenase-like"/>
    <property type="match status" value="1"/>
</dbReference>
<dbReference type="InterPro" id="IPR012147">
    <property type="entry name" value="P_Ac_Bu_trans"/>
</dbReference>
<dbReference type="InterPro" id="IPR004614">
    <property type="entry name" value="P_AcTrfase"/>
</dbReference>
<dbReference type="InterPro" id="IPR042113">
    <property type="entry name" value="P_AcTrfase_dom1"/>
</dbReference>
<dbReference type="InterPro" id="IPR042112">
    <property type="entry name" value="P_AcTrfase_dom2"/>
</dbReference>
<dbReference type="InterPro" id="IPR050500">
    <property type="entry name" value="Phos_Acetyltrans/Butyryltrans"/>
</dbReference>
<dbReference type="InterPro" id="IPR002505">
    <property type="entry name" value="PTA_PTB"/>
</dbReference>
<dbReference type="NCBIfam" id="NF007233">
    <property type="entry name" value="PRK09653.1"/>
    <property type="match status" value="1"/>
</dbReference>
<dbReference type="NCBIfam" id="TIGR00651">
    <property type="entry name" value="pta"/>
    <property type="match status" value="1"/>
</dbReference>
<dbReference type="PANTHER" id="PTHR43356">
    <property type="entry name" value="PHOSPHATE ACETYLTRANSFERASE"/>
    <property type="match status" value="1"/>
</dbReference>
<dbReference type="PANTHER" id="PTHR43356:SF3">
    <property type="entry name" value="PHOSPHATE ACETYLTRANSFERASE"/>
    <property type="match status" value="1"/>
</dbReference>
<dbReference type="Pfam" id="PF01515">
    <property type="entry name" value="PTA_PTB"/>
    <property type="match status" value="1"/>
</dbReference>
<dbReference type="PIRSF" id="PIRSF000428">
    <property type="entry name" value="P_Ac_trans"/>
    <property type="match status" value="1"/>
</dbReference>
<dbReference type="SUPFAM" id="SSF53659">
    <property type="entry name" value="Isocitrate/Isopropylmalate dehydrogenase-like"/>
    <property type="match status" value="1"/>
</dbReference>
<gene>
    <name type="primary">pta</name>
    <name type="ordered locus">BB_0589</name>
</gene>
<protein>
    <recommendedName>
        <fullName>Phosphate acetyltransferase</fullName>
        <ecNumber>2.3.1.8</ecNumber>
    </recommendedName>
    <alternativeName>
        <fullName>Phosphotransacetylase</fullName>
    </alternativeName>
</protein>